<evidence type="ECO:0000269" key="1">
    <source>
    </source>
</evidence>
<evidence type="ECO:0000269" key="2">
    <source ref="1"/>
</evidence>
<evidence type="ECO:0000305" key="3"/>
<dbReference type="EMBL" id="FC622145">
    <property type="status" value="NOT_ANNOTATED_CDS"/>
    <property type="molecule type" value="mRNA"/>
</dbReference>
<dbReference type="RefSeq" id="XP_009051504.1">
    <property type="nucleotide sequence ID" value="XM_009053256.1"/>
</dbReference>
<dbReference type="EnsemblMetazoa" id="LotgiT228268">
    <property type="protein sequence ID" value="LotgiP228268"/>
    <property type="gene ID" value="LotgiG228268"/>
</dbReference>
<dbReference type="GeneID" id="20247606"/>
<dbReference type="KEGG" id="lgi:LOTGIDRAFT_228268"/>
<dbReference type="CTD" id="20247606"/>
<dbReference type="HOGENOM" id="CLU_1462897_0_0_1"/>
<dbReference type="GO" id="GO:0005576">
    <property type="term" value="C:extracellular region"/>
    <property type="evidence" value="ECO:0007669"/>
    <property type="project" value="UniProtKB-SubCell"/>
</dbReference>
<accession>B3A0Q4</accession>
<organism>
    <name type="scientific">Lottia gigantea</name>
    <name type="common">Giant owl limpet</name>
    <dbReference type="NCBI Taxonomy" id="225164"/>
    <lineage>
        <taxon>Eukaryota</taxon>
        <taxon>Metazoa</taxon>
        <taxon>Spiralia</taxon>
        <taxon>Lophotrochozoa</taxon>
        <taxon>Mollusca</taxon>
        <taxon>Gastropoda</taxon>
        <taxon>Patellogastropoda</taxon>
        <taxon>Lottioidea</taxon>
        <taxon>Lottiidae</taxon>
        <taxon>Lottia</taxon>
    </lineage>
</organism>
<name>USP8_LOTGI</name>
<protein>
    <recommendedName>
        <fullName>Uncharacterized shell protein 8</fullName>
        <shortName>LUSP-8</shortName>
    </recommendedName>
</protein>
<proteinExistence type="evidence at protein level"/>
<sequence length="185" mass="21265">MGSQKSPYFDANSVFYIGLLYICIYETLAVSWPTNGQQTSWNNRPSYNQYYQYQRAYPGLYNRPTTAPNAYSKNSAAITTRTTYPYYRSSTYNRYPQQQQQQRWGMPRFPAFLPPLRNYQQVNRLEPFLPPPSGDRNIPLTPGVMRMLGISPHGHMMNRMGMNQPYGPDRTVGGITVDGSDVSYA</sequence>
<keyword id="KW-0903">Direct protein sequencing</keyword>
<keyword id="KW-0964">Secreted</keyword>
<feature type="chain" id="PRO_0000415234" description="Uncharacterized shell protein 8">
    <location>
        <begin position="1"/>
        <end position="185"/>
    </location>
</feature>
<comment type="subcellular location">
    <subcellularLocation>
        <location evidence="1">Secreted</location>
    </subcellularLocation>
</comment>
<comment type="tissue specificity">
    <text evidence="1">Component of the acid-insoluble and acid-soluble organic matrix of calcified layers of the shell (at protein level).</text>
</comment>
<reference evidence="3" key="1">
    <citation type="submission" date="2007-12" db="EMBL/GenBank/DDBJ databases">
        <title>DOE Joint Genome Institute Lottia gigantea EST project.</title>
        <authorList>
            <person name="Richardson P."/>
            <person name="Lucas S."/>
            <person name="Rokhsar D."/>
            <person name="Wang M."/>
            <person name="Lindquist E.A."/>
        </authorList>
    </citation>
    <scope>NUCLEOTIDE SEQUENCE [LARGE SCALE MRNA]</scope>
    <scope>IDENTIFICATION</scope>
    <source>
        <tissue evidence="2">Mantle</tissue>
    </source>
</reference>
<reference key="2">
    <citation type="journal article" date="2013" name="FEBS J.">
        <title>The shell-forming proteome of Lottia gigantea reveals both deep conservations and lineage-specific novelties.</title>
        <authorList>
            <person name="Marie B."/>
            <person name="Jackson D.J."/>
            <person name="Ramos-Silva P."/>
            <person name="Zanella-Cleon I."/>
            <person name="Guichard N."/>
            <person name="Marin F."/>
        </authorList>
    </citation>
    <scope>PROTEIN SEQUENCE OF 74-88 AND 109-185</scope>
    <scope>SUBCELLULAR LOCATION</scope>
    <scope>TISSUE SPECIFICITY</scope>
    <source>
        <tissue>Shell</tissue>
    </source>
</reference>